<evidence type="ECO:0000255" key="1">
    <source>
        <dbReference type="HAMAP-Rule" id="MF_01401"/>
    </source>
</evidence>
<gene>
    <name evidence="1" type="primary">msrA</name>
    <name type="ordered locus">SARI_03222</name>
</gene>
<sequence length="212" mass="23374">MSLFDKKHLVTQADALPGRNTPMPIATLHAVNEHSMTNVPAGMEIAYFAMGCFWGVERLFWQLPGVYSTAAGYAGGYTPNPTYREVCSGQTGHAEAVRVVYDPAVISYEQLLQVFWENHDPAQGMRQGNDHGTQYRSAIYPLTPEQSTAAHASRERFQSAMADAGDERPITTEIAHATPFYYAEDEHQQYLHKNPYGYCGVGGIGVCLPPDA</sequence>
<name>MSRA_SALAR</name>
<keyword id="KW-0560">Oxidoreductase</keyword>
<keyword id="KW-1185">Reference proteome</keyword>
<feature type="chain" id="PRO_1000087358" description="Peptide methionine sulfoxide reductase MsrA">
    <location>
        <begin position="1"/>
        <end position="212"/>
    </location>
</feature>
<feature type="active site" evidence="1">
    <location>
        <position position="52"/>
    </location>
</feature>
<protein>
    <recommendedName>
        <fullName evidence="1">Peptide methionine sulfoxide reductase MsrA</fullName>
        <shortName evidence="1">Protein-methionine-S-oxide reductase</shortName>
        <ecNumber evidence="1">1.8.4.11</ecNumber>
    </recommendedName>
    <alternativeName>
        <fullName evidence="1">Peptide-methionine (S)-S-oxide reductase</fullName>
        <shortName evidence="1">Peptide Met(O) reductase</shortName>
    </alternativeName>
</protein>
<comment type="function">
    <text evidence="1">Has an important function as a repair enzyme for proteins that have been inactivated by oxidation. Catalyzes the reversible oxidation-reduction of methionine sulfoxide in proteins to methionine.</text>
</comment>
<comment type="catalytic activity">
    <reaction evidence="1">
        <text>L-methionyl-[protein] + [thioredoxin]-disulfide + H2O = L-methionyl-(S)-S-oxide-[protein] + [thioredoxin]-dithiol</text>
        <dbReference type="Rhea" id="RHEA:14217"/>
        <dbReference type="Rhea" id="RHEA-COMP:10698"/>
        <dbReference type="Rhea" id="RHEA-COMP:10700"/>
        <dbReference type="Rhea" id="RHEA-COMP:12313"/>
        <dbReference type="Rhea" id="RHEA-COMP:12315"/>
        <dbReference type="ChEBI" id="CHEBI:15377"/>
        <dbReference type="ChEBI" id="CHEBI:16044"/>
        <dbReference type="ChEBI" id="CHEBI:29950"/>
        <dbReference type="ChEBI" id="CHEBI:44120"/>
        <dbReference type="ChEBI" id="CHEBI:50058"/>
        <dbReference type="EC" id="1.8.4.11"/>
    </reaction>
</comment>
<comment type="catalytic activity">
    <reaction evidence="1">
        <text>[thioredoxin]-disulfide + L-methionine + H2O = L-methionine (S)-S-oxide + [thioredoxin]-dithiol</text>
        <dbReference type="Rhea" id="RHEA:19993"/>
        <dbReference type="Rhea" id="RHEA-COMP:10698"/>
        <dbReference type="Rhea" id="RHEA-COMP:10700"/>
        <dbReference type="ChEBI" id="CHEBI:15377"/>
        <dbReference type="ChEBI" id="CHEBI:29950"/>
        <dbReference type="ChEBI" id="CHEBI:50058"/>
        <dbReference type="ChEBI" id="CHEBI:57844"/>
        <dbReference type="ChEBI" id="CHEBI:58772"/>
        <dbReference type="EC" id="1.8.4.11"/>
    </reaction>
</comment>
<comment type="similarity">
    <text evidence="1">Belongs to the MsrA Met sulfoxide reductase family.</text>
</comment>
<dbReference type="EC" id="1.8.4.11" evidence="1"/>
<dbReference type="EMBL" id="CP000880">
    <property type="protein sequence ID" value="ABX23058.1"/>
    <property type="molecule type" value="Genomic_DNA"/>
</dbReference>
<dbReference type="SMR" id="A9MEZ2"/>
<dbReference type="STRING" id="41514.SARI_03222"/>
<dbReference type="KEGG" id="ses:SARI_03222"/>
<dbReference type="HOGENOM" id="CLU_031040_10_3_6"/>
<dbReference type="Proteomes" id="UP000002084">
    <property type="component" value="Chromosome"/>
</dbReference>
<dbReference type="GO" id="GO:0005737">
    <property type="term" value="C:cytoplasm"/>
    <property type="evidence" value="ECO:0007669"/>
    <property type="project" value="TreeGrafter"/>
</dbReference>
<dbReference type="GO" id="GO:0036456">
    <property type="term" value="F:L-methionine-(S)-S-oxide reductase activity"/>
    <property type="evidence" value="ECO:0007669"/>
    <property type="project" value="TreeGrafter"/>
</dbReference>
<dbReference type="GO" id="GO:0008113">
    <property type="term" value="F:peptide-methionine (S)-S-oxide reductase activity"/>
    <property type="evidence" value="ECO:0007669"/>
    <property type="project" value="UniProtKB-UniRule"/>
</dbReference>
<dbReference type="GO" id="GO:0034599">
    <property type="term" value="P:cellular response to oxidative stress"/>
    <property type="evidence" value="ECO:0007669"/>
    <property type="project" value="TreeGrafter"/>
</dbReference>
<dbReference type="GO" id="GO:0036211">
    <property type="term" value="P:protein modification process"/>
    <property type="evidence" value="ECO:0007669"/>
    <property type="project" value="UniProtKB-UniRule"/>
</dbReference>
<dbReference type="FunFam" id="3.30.1060.10:FF:000001">
    <property type="entry name" value="Peptide methionine sulfoxide reductase MsrA"/>
    <property type="match status" value="1"/>
</dbReference>
<dbReference type="Gene3D" id="3.30.1060.10">
    <property type="entry name" value="Peptide methionine sulphoxide reductase MsrA"/>
    <property type="match status" value="1"/>
</dbReference>
<dbReference type="HAMAP" id="MF_01401">
    <property type="entry name" value="MsrA"/>
    <property type="match status" value="1"/>
</dbReference>
<dbReference type="InterPro" id="IPR002569">
    <property type="entry name" value="Met_Sox_Rdtase_MsrA_dom"/>
</dbReference>
<dbReference type="InterPro" id="IPR036509">
    <property type="entry name" value="Met_Sox_Rdtase_MsrA_sf"/>
</dbReference>
<dbReference type="InterPro" id="IPR050162">
    <property type="entry name" value="MsrA_MetSO_reductase"/>
</dbReference>
<dbReference type="NCBIfam" id="TIGR00401">
    <property type="entry name" value="msrA"/>
    <property type="match status" value="1"/>
</dbReference>
<dbReference type="PANTHER" id="PTHR42799">
    <property type="entry name" value="MITOCHONDRIAL PEPTIDE METHIONINE SULFOXIDE REDUCTASE"/>
    <property type="match status" value="1"/>
</dbReference>
<dbReference type="PANTHER" id="PTHR42799:SF2">
    <property type="entry name" value="MITOCHONDRIAL PEPTIDE METHIONINE SULFOXIDE REDUCTASE"/>
    <property type="match status" value="1"/>
</dbReference>
<dbReference type="Pfam" id="PF01625">
    <property type="entry name" value="PMSR"/>
    <property type="match status" value="1"/>
</dbReference>
<dbReference type="SUPFAM" id="SSF55068">
    <property type="entry name" value="Peptide methionine sulfoxide reductase"/>
    <property type="match status" value="1"/>
</dbReference>
<accession>A9MEZ2</accession>
<reference key="1">
    <citation type="submission" date="2007-11" db="EMBL/GenBank/DDBJ databases">
        <authorList>
            <consortium name="The Salmonella enterica serovar Arizonae Genome Sequencing Project"/>
            <person name="McClelland M."/>
            <person name="Sanderson E.K."/>
            <person name="Porwollik S."/>
            <person name="Spieth J."/>
            <person name="Clifton W.S."/>
            <person name="Fulton R."/>
            <person name="Chunyan W."/>
            <person name="Wollam A."/>
            <person name="Shah N."/>
            <person name="Pepin K."/>
            <person name="Bhonagiri V."/>
            <person name="Nash W."/>
            <person name="Johnson M."/>
            <person name="Thiruvilangam P."/>
            <person name="Wilson R."/>
        </authorList>
    </citation>
    <scope>NUCLEOTIDE SEQUENCE [LARGE SCALE GENOMIC DNA]</scope>
    <source>
        <strain>ATCC BAA-731 / CDC346-86 / RSK2980</strain>
    </source>
</reference>
<proteinExistence type="inferred from homology"/>
<organism>
    <name type="scientific">Salmonella arizonae (strain ATCC BAA-731 / CDC346-86 / RSK2980)</name>
    <dbReference type="NCBI Taxonomy" id="41514"/>
    <lineage>
        <taxon>Bacteria</taxon>
        <taxon>Pseudomonadati</taxon>
        <taxon>Pseudomonadota</taxon>
        <taxon>Gammaproteobacteria</taxon>
        <taxon>Enterobacterales</taxon>
        <taxon>Enterobacteriaceae</taxon>
        <taxon>Salmonella</taxon>
    </lineage>
</organism>